<comment type="function">
    <text evidence="1">Modulates RecA activity.</text>
</comment>
<comment type="subcellular location">
    <subcellularLocation>
        <location evidence="1">Cytoplasm</location>
    </subcellularLocation>
</comment>
<comment type="similarity">
    <text evidence="1">Belongs to the RecX family.</text>
</comment>
<accession>P0DD93</accession>
<accession>Q79Y36</accession>
<accession>Q8K6F8</accession>
<keyword id="KW-0963">Cytoplasm</keyword>
<organism>
    <name type="scientific">Streptococcus pyogenes serotype M3 (strain SSI-1)</name>
    <dbReference type="NCBI Taxonomy" id="193567"/>
    <lineage>
        <taxon>Bacteria</taxon>
        <taxon>Bacillati</taxon>
        <taxon>Bacillota</taxon>
        <taxon>Bacilli</taxon>
        <taxon>Lactobacillales</taxon>
        <taxon>Streptococcaceae</taxon>
        <taxon>Streptococcus</taxon>
    </lineage>
</organism>
<gene>
    <name evidence="1" type="primary">recX</name>
    <name type="ordered locus">SPs0506</name>
</gene>
<proteinExistence type="inferred from homology"/>
<dbReference type="EMBL" id="BA000034">
    <property type="protein sequence ID" value="BAC63601.1"/>
    <property type="molecule type" value="Genomic_DNA"/>
</dbReference>
<dbReference type="RefSeq" id="WP_002991791.1">
    <property type="nucleotide sequence ID" value="NC_004606.1"/>
</dbReference>
<dbReference type="SMR" id="P0DD93"/>
<dbReference type="GeneID" id="69900527"/>
<dbReference type="KEGG" id="sps:SPs0506"/>
<dbReference type="HOGENOM" id="CLU_066607_4_0_9"/>
<dbReference type="GO" id="GO:0005737">
    <property type="term" value="C:cytoplasm"/>
    <property type="evidence" value="ECO:0007669"/>
    <property type="project" value="UniProtKB-SubCell"/>
</dbReference>
<dbReference type="GO" id="GO:0006282">
    <property type="term" value="P:regulation of DNA repair"/>
    <property type="evidence" value="ECO:0007669"/>
    <property type="project" value="UniProtKB-UniRule"/>
</dbReference>
<dbReference type="Gene3D" id="1.10.10.10">
    <property type="entry name" value="Winged helix-like DNA-binding domain superfamily/Winged helix DNA-binding domain"/>
    <property type="match status" value="4"/>
</dbReference>
<dbReference type="HAMAP" id="MF_01114">
    <property type="entry name" value="RecX"/>
    <property type="match status" value="1"/>
</dbReference>
<dbReference type="InterPro" id="IPR053926">
    <property type="entry name" value="RecX_HTH_1st"/>
</dbReference>
<dbReference type="InterPro" id="IPR053924">
    <property type="entry name" value="RecX_HTH_2nd"/>
</dbReference>
<dbReference type="InterPro" id="IPR053925">
    <property type="entry name" value="RecX_HTH_3rd"/>
</dbReference>
<dbReference type="InterPro" id="IPR003783">
    <property type="entry name" value="Regulatory_RecX"/>
</dbReference>
<dbReference type="InterPro" id="IPR036388">
    <property type="entry name" value="WH-like_DNA-bd_sf"/>
</dbReference>
<dbReference type="NCBIfam" id="NF010733">
    <property type="entry name" value="PRK14135.1"/>
    <property type="match status" value="1"/>
</dbReference>
<dbReference type="PANTHER" id="PTHR33602">
    <property type="entry name" value="REGULATORY PROTEIN RECX FAMILY PROTEIN"/>
    <property type="match status" value="1"/>
</dbReference>
<dbReference type="PANTHER" id="PTHR33602:SF1">
    <property type="entry name" value="REGULATORY PROTEIN RECX FAMILY PROTEIN"/>
    <property type="match status" value="1"/>
</dbReference>
<dbReference type="Pfam" id="PF21982">
    <property type="entry name" value="RecX_HTH1"/>
    <property type="match status" value="1"/>
</dbReference>
<dbReference type="Pfam" id="PF02631">
    <property type="entry name" value="RecX_HTH2"/>
    <property type="match status" value="1"/>
</dbReference>
<dbReference type="Pfam" id="PF21981">
    <property type="entry name" value="RecX_HTH3"/>
    <property type="match status" value="2"/>
</dbReference>
<sequence>MKITKIEKKKRLYLIELDNDDSLYVTEDTIVRFMLSKDKVLDNDQLEDMKHFAQLSYGKNLALYFLSFQQRSNKQVADYLRKHEIEEHIIADIITQLQEEQWIDDTKLADTYIRQNQLNGDKGPQVLKQKLLQKGIASHDIDPILSQTDFSQLAQKVSQKLFDKYQEKLPPKALKDKITQALLTKGFSYDLAKHSLNHLNFDQNNQEIEDLLDKELDKQYRKLSRKYDGYTLKQKLYQALYRKGYNSDDINCKLRNYL</sequence>
<feature type="chain" id="PRO_0000411486" description="Regulatory protein RecX">
    <location>
        <begin position="1"/>
        <end position="258"/>
    </location>
</feature>
<evidence type="ECO:0000255" key="1">
    <source>
        <dbReference type="HAMAP-Rule" id="MF_01114"/>
    </source>
</evidence>
<name>RECX_STRPQ</name>
<reference key="1">
    <citation type="journal article" date="2003" name="Genome Res.">
        <title>Genome sequence of an M3 strain of Streptococcus pyogenes reveals a large-scale genomic rearrangement in invasive strains and new insights into phage evolution.</title>
        <authorList>
            <person name="Nakagawa I."/>
            <person name="Kurokawa K."/>
            <person name="Yamashita A."/>
            <person name="Nakata M."/>
            <person name="Tomiyasu Y."/>
            <person name="Okahashi N."/>
            <person name="Kawabata S."/>
            <person name="Yamazaki K."/>
            <person name="Shiba T."/>
            <person name="Yasunaga T."/>
            <person name="Hayashi H."/>
            <person name="Hattori M."/>
            <person name="Hamada S."/>
        </authorList>
    </citation>
    <scope>NUCLEOTIDE SEQUENCE [LARGE SCALE GENOMIC DNA]</scope>
    <source>
        <strain>SSI-1</strain>
    </source>
</reference>
<protein>
    <recommendedName>
        <fullName evidence="1">Regulatory protein RecX</fullName>
    </recommendedName>
</protein>